<organism>
    <name type="scientific">Brucella abortus (strain 2308)</name>
    <dbReference type="NCBI Taxonomy" id="359391"/>
    <lineage>
        <taxon>Bacteria</taxon>
        <taxon>Pseudomonadati</taxon>
        <taxon>Pseudomonadota</taxon>
        <taxon>Alphaproteobacteria</taxon>
        <taxon>Hyphomicrobiales</taxon>
        <taxon>Brucellaceae</taxon>
        <taxon>Brucella/Ochrobactrum group</taxon>
        <taxon>Brucella</taxon>
    </lineage>
</organism>
<proteinExistence type="inferred from homology"/>
<evidence type="ECO:0000255" key="1">
    <source>
        <dbReference type="HAMAP-Rule" id="MF_01037"/>
    </source>
</evidence>
<name>TRMFO_BRUA2</name>
<dbReference type="EC" id="2.1.1.74" evidence="1"/>
<dbReference type="EMBL" id="AM040264">
    <property type="protein sequence ID" value="CAJ10869.1"/>
    <property type="molecule type" value="Genomic_DNA"/>
</dbReference>
<dbReference type="RefSeq" id="WP_002964025.1">
    <property type="nucleotide sequence ID" value="NZ_KN046823.1"/>
</dbReference>
<dbReference type="SMR" id="Q2YNL7"/>
<dbReference type="STRING" id="359391.BAB1_0913"/>
<dbReference type="GeneID" id="93016728"/>
<dbReference type="KEGG" id="bmf:BAB1_0913"/>
<dbReference type="PATRIC" id="fig|359391.11.peg.3224"/>
<dbReference type="HOGENOM" id="CLU_033057_1_0_5"/>
<dbReference type="Proteomes" id="UP000002719">
    <property type="component" value="Chromosome I"/>
</dbReference>
<dbReference type="GO" id="GO:0005829">
    <property type="term" value="C:cytosol"/>
    <property type="evidence" value="ECO:0007669"/>
    <property type="project" value="TreeGrafter"/>
</dbReference>
<dbReference type="GO" id="GO:0050660">
    <property type="term" value="F:flavin adenine dinucleotide binding"/>
    <property type="evidence" value="ECO:0007669"/>
    <property type="project" value="UniProtKB-UniRule"/>
</dbReference>
<dbReference type="GO" id="GO:0047151">
    <property type="term" value="F:tRNA (uracil(54)-C5)-methyltransferase activity, 5,10-methylenetetrahydrofolate-dependent"/>
    <property type="evidence" value="ECO:0007669"/>
    <property type="project" value="UniProtKB-UniRule"/>
</dbReference>
<dbReference type="GO" id="GO:0030488">
    <property type="term" value="P:tRNA methylation"/>
    <property type="evidence" value="ECO:0007669"/>
    <property type="project" value="TreeGrafter"/>
</dbReference>
<dbReference type="GO" id="GO:0002098">
    <property type="term" value="P:tRNA wobble uridine modification"/>
    <property type="evidence" value="ECO:0007669"/>
    <property type="project" value="TreeGrafter"/>
</dbReference>
<dbReference type="Gene3D" id="3.50.50.60">
    <property type="entry name" value="FAD/NAD(P)-binding domain"/>
    <property type="match status" value="2"/>
</dbReference>
<dbReference type="HAMAP" id="MF_01037">
    <property type="entry name" value="TrmFO"/>
    <property type="match status" value="1"/>
</dbReference>
<dbReference type="InterPro" id="IPR036188">
    <property type="entry name" value="FAD/NAD-bd_sf"/>
</dbReference>
<dbReference type="InterPro" id="IPR002218">
    <property type="entry name" value="MnmG-rel"/>
</dbReference>
<dbReference type="InterPro" id="IPR020595">
    <property type="entry name" value="MnmG-rel_CS"/>
</dbReference>
<dbReference type="InterPro" id="IPR040131">
    <property type="entry name" value="MnmG_N"/>
</dbReference>
<dbReference type="InterPro" id="IPR004417">
    <property type="entry name" value="TrmFO"/>
</dbReference>
<dbReference type="NCBIfam" id="TIGR00137">
    <property type="entry name" value="gid_trmFO"/>
    <property type="match status" value="1"/>
</dbReference>
<dbReference type="NCBIfam" id="NF003739">
    <property type="entry name" value="PRK05335.1"/>
    <property type="match status" value="1"/>
</dbReference>
<dbReference type="PANTHER" id="PTHR11806">
    <property type="entry name" value="GLUCOSE INHIBITED DIVISION PROTEIN A"/>
    <property type="match status" value="1"/>
</dbReference>
<dbReference type="PANTHER" id="PTHR11806:SF2">
    <property type="entry name" value="METHYLENETETRAHYDROFOLATE--TRNA-(URACIL-5-)-METHYLTRANSFERASE TRMFO"/>
    <property type="match status" value="1"/>
</dbReference>
<dbReference type="Pfam" id="PF01134">
    <property type="entry name" value="GIDA"/>
    <property type="match status" value="1"/>
</dbReference>
<dbReference type="SUPFAM" id="SSF51905">
    <property type="entry name" value="FAD/NAD(P)-binding domain"/>
    <property type="match status" value="1"/>
</dbReference>
<dbReference type="PROSITE" id="PS01281">
    <property type="entry name" value="GIDA_2"/>
    <property type="match status" value="1"/>
</dbReference>
<protein>
    <recommendedName>
        <fullName evidence="1">Methylenetetrahydrofolate--tRNA-(uracil-5-)-methyltransferase TrmFO</fullName>
        <ecNumber evidence="1">2.1.1.74</ecNumber>
    </recommendedName>
    <alternativeName>
        <fullName evidence="1">Folate-dependent tRNA (uracil-5-)-methyltransferase</fullName>
    </alternativeName>
    <alternativeName>
        <fullName evidence="1">Folate-dependent tRNA(M-5-U54)-methyltransferase</fullName>
    </alternativeName>
</protein>
<reference key="1">
    <citation type="journal article" date="2005" name="Infect. Immun.">
        <title>Whole-genome analyses of speciation events in pathogenic Brucellae.</title>
        <authorList>
            <person name="Chain P.S."/>
            <person name="Comerci D.J."/>
            <person name="Tolmasky M.E."/>
            <person name="Larimer F.W."/>
            <person name="Malfatti S.A."/>
            <person name="Vergez L.M."/>
            <person name="Aguero F."/>
            <person name="Land M.L."/>
            <person name="Ugalde R.A."/>
            <person name="Garcia E."/>
        </authorList>
    </citation>
    <scope>NUCLEOTIDE SEQUENCE [LARGE SCALE GENOMIC DNA]</scope>
    <source>
        <strain>2308</strain>
    </source>
</reference>
<comment type="function">
    <text evidence="1">Catalyzes the folate-dependent formation of 5-methyl-uridine at position 54 (M-5-U54) in all tRNAs.</text>
</comment>
<comment type="catalytic activity">
    <reaction evidence="1">
        <text>uridine(54) in tRNA + (6R)-5,10-methylene-5,6,7,8-tetrahydrofolate + NADH + H(+) = 5-methyluridine(54) in tRNA + (6S)-5,6,7,8-tetrahydrofolate + NAD(+)</text>
        <dbReference type="Rhea" id="RHEA:16873"/>
        <dbReference type="Rhea" id="RHEA-COMP:10167"/>
        <dbReference type="Rhea" id="RHEA-COMP:10193"/>
        <dbReference type="ChEBI" id="CHEBI:15378"/>
        <dbReference type="ChEBI" id="CHEBI:15636"/>
        <dbReference type="ChEBI" id="CHEBI:57453"/>
        <dbReference type="ChEBI" id="CHEBI:57540"/>
        <dbReference type="ChEBI" id="CHEBI:57945"/>
        <dbReference type="ChEBI" id="CHEBI:65315"/>
        <dbReference type="ChEBI" id="CHEBI:74447"/>
        <dbReference type="EC" id="2.1.1.74"/>
    </reaction>
</comment>
<comment type="catalytic activity">
    <reaction evidence="1">
        <text>uridine(54) in tRNA + (6R)-5,10-methylene-5,6,7,8-tetrahydrofolate + NADPH + H(+) = 5-methyluridine(54) in tRNA + (6S)-5,6,7,8-tetrahydrofolate + NADP(+)</text>
        <dbReference type="Rhea" id="RHEA:62372"/>
        <dbReference type="Rhea" id="RHEA-COMP:10167"/>
        <dbReference type="Rhea" id="RHEA-COMP:10193"/>
        <dbReference type="ChEBI" id="CHEBI:15378"/>
        <dbReference type="ChEBI" id="CHEBI:15636"/>
        <dbReference type="ChEBI" id="CHEBI:57453"/>
        <dbReference type="ChEBI" id="CHEBI:57783"/>
        <dbReference type="ChEBI" id="CHEBI:58349"/>
        <dbReference type="ChEBI" id="CHEBI:65315"/>
        <dbReference type="ChEBI" id="CHEBI:74447"/>
        <dbReference type="EC" id="2.1.1.74"/>
    </reaction>
</comment>
<comment type="cofactor">
    <cofactor evidence="1">
        <name>FAD</name>
        <dbReference type="ChEBI" id="CHEBI:57692"/>
    </cofactor>
</comment>
<comment type="subcellular location">
    <subcellularLocation>
        <location evidence="1">Cytoplasm</location>
    </subcellularLocation>
</comment>
<comment type="similarity">
    <text evidence="1">Belongs to the MnmG family. TrmFO subfamily.</text>
</comment>
<feature type="chain" id="PRO_1000063912" description="Methylenetetrahydrofolate--tRNA-(uracil-5-)-methyltransferase TrmFO">
    <location>
        <begin position="1"/>
        <end position="466"/>
    </location>
</feature>
<feature type="binding site" evidence="1">
    <location>
        <begin position="14"/>
        <end position="19"/>
    </location>
    <ligand>
        <name>FAD</name>
        <dbReference type="ChEBI" id="CHEBI:57692"/>
    </ligand>
</feature>
<sequence length="466" mass="50174">MSNNTDLSPVHVIGGGLAGSEAAWQIAQAGVPVVLHEMRPVRGTDAHKTEQLAELVCSNSFRSDDAETNAVGVLHAEMRLAGSLIMACADAHQVPAGGALAVDREGFSQAVTARLEAHPLITIEREEITGLPPTEWGTTIIATGPLTAPSLAEAIAAETDADALAFFDAIAPIIHFDSINMDVCWFQSRYDKVGPGGTGKDYINCPMDKEQYEAFVAALIEGDKTDFKEWEGTPYFDGCLPIEVMAERGPETLRHGPMKPMGLTNAHNPTVKPYAVVQLRQDNALGTLYNMVGFQTKLKYGSQTGIFKMIPGLENAEFARLGGLHRNTYLNSPVLLDNVLRLKSRQTLRFAGQVTGCEGYVESSAIGLLAGRFTAAEKLSQAAVPPPPTTAFGALLGHITGGHIVTNDEPGKRSFQPMNVNFGLFPPVDVPKPEGKRLRGKEKTIAKKRALSARALADCRNWLSLY</sequence>
<accession>Q2YNL7</accession>
<keyword id="KW-0963">Cytoplasm</keyword>
<keyword id="KW-0274">FAD</keyword>
<keyword id="KW-0285">Flavoprotein</keyword>
<keyword id="KW-0489">Methyltransferase</keyword>
<keyword id="KW-0520">NAD</keyword>
<keyword id="KW-0521">NADP</keyword>
<keyword id="KW-1185">Reference proteome</keyword>
<keyword id="KW-0808">Transferase</keyword>
<keyword id="KW-0819">tRNA processing</keyword>
<gene>
    <name evidence="1" type="primary">trmFO</name>
    <name type="synonym">gid</name>
    <name type="ordered locus">BAB1_0913</name>
</gene>